<accession>Q17ZL6</accession>
<reference key="1">
    <citation type="journal article" date="2006" name="PLoS Genet.">
        <title>Who ate whom? Adaptive Helicobacter genomic changes that accompanied a host jump from early humans to large felines.</title>
        <authorList>
            <person name="Eppinger M."/>
            <person name="Baar C."/>
            <person name="Linz B."/>
            <person name="Raddatz G."/>
            <person name="Lanz C."/>
            <person name="Keller H."/>
            <person name="Morelli G."/>
            <person name="Gressmann H."/>
            <person name="Achtman M."/>
            <person name="Schuster S.C."/>
        </authorList>
    </citation>
    <scope>NUCLEOTIDE SEQUENCE [LARGE SCALE GENOMIC DNA]</scope>
    <source>
        <strain>Sheeba</strain>
    </source>
</reference>
<organism>
    <name type="scientific">Helicobacter acinonychis (strain Sheeba)</name>
    <dbReference type="NCBI Taxonomy" id="382638"/>
    <lineage>
        <taxon>Bacteria</taxon>
        <taxon>Pseudomonadati</taxon>
        <taxon>Campylobacterota</taxon>
        <taxon>Epsilonproteobacteria</taxon>
        <taxon>Campylobacterales</taxon>
        <taxon>Helicobacteraceae</taxon>
        <taxon>Helicobacter</taxon>
    </lineage>
</organism>
<protein>
    <recommendedName>
        <fullName evidence="1">Aspartate 1-decarboxylase</fullName>
        <ecNumber evidence="1">4.1.1.11</ecNumber>
    </recommendedName>
    <alternativeName>
        <fullName evidence="1">Aspartate alpha-decarboxylase</fullName>
    </alternativeName>
    <component>
        <recommendedName>
            <fullName evidence="1">Aspartate 1-decarboxylase beta chain</fullName>
        </recommendedName>
    </component>
    <component>
        <recommendedName>
            <fullName evidence="1">Aspartate 1-decarboxylase alpha chain</fullName>
        </recommendedName>
    </component>
</protein>
<proteinExistence type="inferred from homology"/>
<keyword id="KW-0068">Autocatalytic cleavage</keyword>
<keyword id="KW-0963">Cytoplasm</keyword>
<keyword id="KW-0210">Decarboxylase</keyword>
<keyword id="KW-0456">Lyase</keyword>
<keyword id="KW-0566">Pantothenate biosynthesis</keyword>
<keyword id="KW-0670">Pyruvate</keyword>
<keyword id="KW-0704">Schiff base</keyword>
<keyword id="KW-0865">Zymogen</keyword>
<comment type="function">
    <text evidence="1">Catalyzes the pyruvoyl-dependent decarboxylation of aspartate to produce beta-alanine.</text>
</comment>
<comment type="catalytic activity">
    <reaction evidence="1">
        <text>L-aspartate + H(+) = beta-alanine + CO2</text>
        <dbReference type="Rhea" id="RHEA:19497"/>
        <dbReference type="ChEBI" id="CHEBI:15378"/>
        <dbReference type="ChEBI" id="CHEBI:16526"/>
        <dbReference type="ChEBI" id="CHEBI:29991"/>
        <dbReference type="ChEBI" id="CHEBI:57966"/>
        <dbReference type="EC" id="4.1.1.11"/>
    </reaction>
</comment>
<comment type="cofactor">
    <cofactor evidence="1">
        <name>pyruvate</name>
        <dbReference type="ChEBI" id="CHEBI:15361"/>
    </cofactor>
    <text evidence="1">Binds 1 pyruvoyl group covalently per subunit.</text>
</comment>
<comment type="pathway">
    <text evidence="1">Cofactor biosynthesis; (R)-pantothenate biosynthesis; beta-alanine from L-aspartate: step 1/1.</text>
</comment>
<comment type="subunit">
    <text evidence="1">Heterooctamer of four alpha and four beta subunits.</text>
</comment>
<comment type="subcellular location">
    <subcellularLocation>
        <location evidence="1">Cytoplasm</location>
    </subcellularLocation>
</comment>
<comment type="PTM">
    <text evidence="1">Is synthesized initially as an inactive proenzyme, which is activated by self-cleavage at a specific serine bond to produce a beta-subunit with a hydroxyl group at its C-terminus and an alpha-subunit with a pyruvoyl group at its N-terminus.</text>
</comment>
<comment type="similarity">
    <text evidence="1">Belongs to the PanD family.</text>
</comment>
<comment type="sequence caution" evidence="2">
    <conflict type="erroneous initiation">
        <sequence resource="EMBL-CDS" id="CAJ98910"/>
    </conflict>
</comment>
<feature type="chain" id="PRO_0000306995" description="Aspartate 1-decarboxylase beta chain" evidence="1">
    <location>
        <begin position="1"/>
        <end position="24"/>
    </location>
</feature>
<feature type="chain" id="PRO_0000306996" description="Aspartate 1-decarboxylase alpha chain" evidence="1">
    <location>
        <begin position="25"/>
        <end position="116"/>
    </location>
</feature>
<feature type="active site" description="Schiff-base intermediate with substrate; via pyruvic acid" evidence="1">
    <location>
        <position position="25"/>
    </location>
</feature>
<feature type="active site" description="Proton donor" evidence="1">
    <location>
        <position position="58"/>
    </location>
</feature>
<feature type="binding site" evidence="1">
    <location>
        <position position="57"/>
    </location>
    <ligand>
        <name>substrate</name>
    </ligand>
</feature>
<feature type="binding site" evidence="1">
    <location>
        <begin position="72"/>
        <end position="74"/>
    </location>
    <ligand>
        <name>substrate</name>
    </ligand>
</feature>
<feature type="modified residue" description="Pyruvic acid (Ser)" evidence="1">
    <location>
        <position position="25"/>
    </location>
</feature>
<evidence type="ECO:0000255" key="1">
    <source>
        <dbReference type="HAMAP-Rule" id="MF_00446"/>
    </source>
</evidence>
<evidence type="ECO:0000305" key="2"/>
<dbReference type="EC" id="4.1.1.11" evidence="1"/>
<dbReference type="EMBL" id="AM260522">
    <property type="protein sequence ID" value="CAJ98910.1"/>
    <property type="status" value="ALT_INIT"/>
    <property type="molecule type" value="Genomic_DNA"/>
</dbReference>
<dbReference type="RefSeq" id="WP_041600152.1">
    <property type="nucleotide sequence ID" value="NC_008229.1"/>
</dbReference>
<dbReference type="SMR" id="Q17ZL6"/>
<dbReference type="STRING" id="382638.Hac_0047"/>
<dbReference type="GeneID" id="31757596"/>
<dbReference type="KEGG" id="hac:Hac_0047"/>
<dbReference type="eggNOG" id="COG0853">
    <property type="taxonomic scope" value="Bacteria"/>
</dbReference>
<dbReference type="HOGENOM" id="CLU_115305_2_0_7"/>
<dbReference type="OrthoDB" id="9803983at2"/>
<dbReference type="BioCyc" id="HACI382638:HAC_RS00210-MONOMER"/>
<dbReference type="UniPathway" id="UPA00028">
    <property type="reaction ID" value="UER00002"/>
</dbReference>
<dbReference type="Proteomes" id="UP000000775">
    <property type="component" value="Chromosome"/>
</dbReference>
<dbReference type="GO" id="GO:0005829">
    <property type="term" value="C:cytosol"/>
    <property type="evidence" value="ECO:0007669"/>
    <property type="project" value="TreeGrafter"/>
</dbReference>
<dbReference type="GO" id="GO:0004068">
    <property type="term" value="F:aspartate 1-decarboxylase activity"/>
    <property type="evidence" value="ECO:0007669"/>
    <property type="project" value="UniProtKB-UniRule"/>
</dbReference>
<dbReference type="GO" id="GO:0006523">
    <property type="term" value="P:alanine biosynthetic process"/>
    <property type="evidence" value="ECO:0007669"/>
    <property type="project" value="InterPro"/>
</dbReference>
<dbReference type="GO" id="GO:0015940">
    <property type="term" value="P:pantothenate biosynthetic process"/>
    <property type="evidence" value="ECO:0007669"/>
    <property type="project" value="UniProtKB-UniRule"/>
</dbReference>
<dbReference type="CDD" id="cd06919">
    <property type="entry name" value="Asp_decarbox"/>
    <property type="match status" value="1"/>
</dbReference>
<dbReference type="Gene3D" id="2.40.40.20">
    <property type="match status" value="1"/>
</dbReference>
<dbReference type="HAMAP" id="MF_00446">
    <property type="entry name" value="PanD"/>
    <property type="match status" value="1"/>
</dbReference>
<dbReference type="InterPro" id="IPR009010">
    <property type="entry name" value="Asp_de-COase-like_dom_sf"/>
</dbReference>
<dbReference type="InterPro" id="IPR003190">
    <property type="entry name" value="Asp_decarbox"/>
</dbReference>
<dbReference type="NCBIfam" id="TIGR00223">
    <property type="entry name" value="panD"/>
    <property type="match status" value="1"/>
</dbReference>
<dbReference type="PANTHER" id="PTHR21012">
    <property type="entry name" value="ASPARTATE 1-DECARBOXYLASE"/>
    <property type="match status" value="1"/>
</dbReference>
<dbReference type="PANTHER" id="PTHR21012:SF0">
    <property type="entry name" value="ASPARTATE 1-DECARBOXYLASE"/>
    <property type="match status" value="1"/>
</dbReference>
<dbReference type="Pfam" id="PF02261">
    <property type="entry name" value="Asp_decarbox"/>
    <property type="match status" value="1"/>
</dbReference>
<dbReference type="PIRSF" id="PIRSF006246">
    <property type="entry name" value="Asp_decarbox"/>
    <property type="match status" value="1"/>
</dbReference>
<dbReference type="SUPFAM" id="SSF50692">
    <property type="entry name" value="ADC-like"/>
    <property type="match status" value="1"/>
</dbReference>
<sequence>MTFEMLYSKIHRATITDANLNYVGSITIDENLAKLAKLREGMKVEIVNINNGERFSTYVILGKKRGEICVNGAAARKVAIGDVVIILAYASMNEDEMNVHKPCIVLVNEKNEILEK</sequence>
<gene>
    <name evidence="1" type="primary">panD</name>
    <name type="ordered locus">Hac_0047</name>
</gene>
<name>PAND_HELAH</name>